<evidence type="ECO:0000250" key="1">
    <source>
        <dbReference type="UniProtKB" id="Q96A19"/>
    </source>
</evidence>
<evidence type="ECO:0000255" key="2"/>
<evidence type="ECO:0000256" key="3">
    <source>
        <dbReference type="SAM" id="MobiDB-lite"/>
    </source>
</evidence>
<evidence type="ECO:0000305" key="4"/>
<evidence type="ECO:0007744" key="5">
    <source>
    </source>
</evidence>
<sequence length="549" mass="62624">MSHGPSPRLAESPQLSKSSLLTILGSPSPERMGPADSLPPTPPSGTPSPGPPPSLPLTAPALLADGDWESREELRLRELEEARARALQMEKTMRWWSDCTANWREKWSKVRAERNRAREEVRQLRQRLDTLTKELAGARRERQEAQGECEARGRELARLRGVHSAADKTHDGPEPEREQEPVRDIGAERPPGSQELDLVESLLKSRPEEPEGCWDACSVAAGGPRVSSGRQDRNRLPWEDTASTEEDASKLTALRLRLDESQKVLLKEREDKLALSKNIEKLEGELSQWKIKYEELSKTKQEMLKQLSILKETHQDELGRMSEDLEDELGARSSMDRKMAELRGEMERLQAENAAEWGRRERLETEKLGLERENKKLRAQVGDLEEALARRRRQNASALDCDLRASQAALFEKNKELADLKHVHGKLKKQFQEKVAELAHANRRVEQHETEVKKLRLRVEELKKELAQAEDELDEAHNQARKLQRSLDEQTEQSENLQVQLEHLQSRLRRQQQNAPLFGKIRSTRFGTEEAGDGASDLDEDEDLQIQVA</sequence>
<reference key="1">
    <citation type="journal article" date="2005" name="Science">
        <title>The transcriptional landscape of the mammalian genome.</title>
        <authorList>
            <person name="Carninci P."/>
            <person name="Kasukawa T."/>
            <person name="Katayama S."/>
            <person name="Gough J."/>
            <person name="Frith M.C."/>
            <person name="Maeda N."/>
            <person name="Oyama R."/>
            <person name="Ravasi T."/>
            <person name="Lenhard B."/>
            <person name="Wells C."/>
            <person name="Kodzius R."/>
            <person name="Shimokawa K."/>
            <person name="Bajic V.B."/>
            <person name="Brenner S.E."/>
            <person name="Batalov S."/>
            <person name="Forrest A.R."/>
            <person name="Zavolan M."/>
            <person name="Davis M.J."/>
            <person name="Wilming L.G."/>
            <person name="Aidinis V."/>
            <person name="Allen J.E."/>
            <person name="Ambesi-Impiombato A."/>
            <person name="Apweiler R."/>
            <person name="Aturaliya R.N."/>
            <person name="Bailey T.L."/>
            <person name="Bansal M."/>
            <person name="Baxter L."/>
            <person name="Beisel K.W."/>
            <person name="Bersano T."/>
            <person name="Bono H."/>
            <person name="Chalk A.M."/>
            <person name="Chiu K.P."/>
            <person name="Choudhary V."/>
            <person name="Christoffels A."/>
            <person name="Clutterbuck D.R."/>
            <person name="Crowe M.L."/>
            <person name="Dalla E."/>
            <person name="Dalrymple B.P."/>
            <person name="de Bono B."/>
            <person name="Della Gatta G."/>
            <person name="di Bernardo D."/>
            <person name="Down T."/>
            <person name="Engstrom P."/>
            <person name="Fagiolini M."/>
            <person name="Faulkner G."/>
            <person name="Fletcher C.F."/>
            <person name="Fukushima T."/>
            <person name="Furuno M."/>
            <person name="Futaki S."/>
            <person name="Gariboldi M."/>
            <person name="Georgii-Hemming P."/>
            <person name="Gingeras T.R."/>
            <person name="Gojobori T."/>
            <person name="Green R.E."/>
            <person name="Gustincich S."/>
            <person name="Harbers M."/>
            <person name="Hayashi Y."/>
            <person name="Hensch T.K."/>
            <person name="Hirokawa N."/>
            <person name="Hill D."/>
            <person name="Huminiecki L."/>
            <person name="Iacono M."/>
            <person name="Ikeo K."/>
            <person name="Iwama A."/>
            <person name="Ishikawa T."/>
            <person name="Jakt M."/>
            <person name="Kanapin A."/>
            <person name="Katoh M."/>
            <person name="Kawasawa Y."/>
            <person name="Kelso J."/>
            <person name="Kitamura H."/>
            <person name="Kitano H."/>
            <person name="Kollias G."/>
            <person name="Krishnan S.P."/>
            <person name="Kruger A."/>
            <person name="Kummerfeld S.K."/>
            <person name="Kurochkin I.V."/>
            <person name="Lareau L.F."/>
            <person name="Lazarevic D."/>
            <person name="Lipovich L."/>
            <person name="Liu J."/>
            <person name="Liuni S."/>
            <person name="McWilliam S."/>
            <person name="Madan Babu M."/>
            <person name="Madera M."/>
            <person name="Marchionni L."/>
            <person name="Matsuda H."/>
            <person name="Matsuzawa S."/>
            <person name="Miki H."/>
            <person name="Mignone F."/>
            <person name="Miyake S."/>
            <person name="Morris K."/>
            <person name="Mottagui-Tabar S."/>
            <person name="Mulder N."/>
            <person name="Nakano N."/>
            <person name="Nakauchi H."/>
            <person name="Ng P."/>
            <person name="Nilsson R."/>
            <person name="Nishiguchi S."/>
            <person name="Nishikawa S."/>
            <person name="Nori F."/>
            <person name="Ohara O."/>
            <person name="Okazaki Y."/>
            <person name="Orlando V."/>
            <person name="Pang K.C."/>
            <person name="Pavan W.J."/>
            <person name="Pavesi G."/>
            <person name="Pesole G."/>
            <person name="Petrovsky N."/>
            <person name="Piazza S."/>
            <person name="Reed J."/>
            <person name="Reid J.F."/>
            <person name="Ring B.Z."/>
            <person name="Ringwald M."/>
            <person name="Rost B."/>
            <person name="Ruan Y."/>
            <person name="Salzberg S.L."/>
            <person name="Sandelin A."/>
            <person name="Schneider C."/>
            <person name="Schoenbach C."/>
            <person name="Sekiguchi K."/>
            <person name="Semple C.A."/>
            <person name="Seno S."/>
            <person name="Sessa L."/>
            <person name="Sheng Y."/>
            <person name="Shibata Y."/>
            <person name="Shimada H."/>
            <person name="Shimada K."/>
            <person name="Silva D."/>
            <person name="Sinclair B."/>
            <person name="Sperling S."/>
            <person name="Stupka E."/>
            <person name="Sugiura K."/>
            <person name="Sultana R."/>
            <person name="Takenaka Y."/>
            <person name="Taki K."/>
            <person name="Tammoja K."/>
            <person name="Tan S.L."/>
            <person name="Tang S."/>
            <person name="Taylor M.S."/>
            <person name="Tegner J."/>
            <person name="Teichmann S.A."/>
            <person name="Ueda H.R."/>
            <person name="van Nimwegen E."/>
            <person name="Verardo R."/>
            <person name="Wei C.L."/>
            <person name="Yagi K."/>
            <person name="Yamanishi H."/>
            <person name="Zabarovsky E."/>
            <person name="Zhu S."/>
            <person name="Zimmer A."/>
            <person name="Hide W."/>
            <person name="Bult C."/>
            <person name="Grimmond S.M."/>
            <person name="Teasdale R.D."/>
            <person name="Liu E.T."/>
            <person name="Brusic V."/>
            <person name="Quackenbush J."/>
            <person name="Wahlestedt C."/>
            <person name="Mattick J.S."/>
            <person name="Hume D.A."/>
            <person name="Kai C."/>
            <person name="Sasaki D."/>
            <person name="Tomaru Y."/>
            <person name="Fukuda S."/>
            <person name="Kanamori-Katayama M."/>
            <person name="Suzuki M."/>
            <person name="Aoki J."/>
            <person name="Arakawa T."/>
            <person name="Iida J."/>
            <person name="Imamura K."/>
            <person name="Itoh M."/>
            <person name="Kato T."/>
            <person name="Kawaji H."/>
            <person name="Kawagashira N."/>
            <person name="Kawashima T."/>
            <person name="Kojima M."/>
            <person name="Kondo S."/>
            <person name="Konno H."/>
            <person name="Nakano K."/>
            <person name="Ninomiya N."/>
            <person name="Nishio T."/>
            <person name="Okada M."/>
            <person name="Plessy C."/>
            <person name="Shibata K."/>
            <person name="Shiraki T."/>
            <person name="Suzuki S."/>
            <person name="Tagami M."/>
            <person name="Waki K."/>
            <person name="Watahiki A."/>
            <person name="Okamura-Oho Y."/>
            <person name="Suzuki H."/>
            <person name="Kawai J."/>
            <person name="Hayashizaki Y."/>
        </authorList>
    </citation>
    <scope>NUCLEOTIDE SEQUENCE [LARGE SCALE MRNA]</scope>
</reference>
<reference key="2">
    <citation type="journal article" date="2004" name="Genome Res.">
        <title>The status, quality, and expansion of the NIH full-length cDNA project: the Mammalian Gene Collection (MGC).</title>
        <authorList>
            <consortium name="The MGC Project Team"/>
        </authorList>
    </citation>
    <scope>NUCLEOTIDE SEQUENCE [LARGE SCALE MRNA] OF 94-549</scope>
</reference>
<reference key="3">
    <citation type="journal article" date="2010" name="Cell">
        <title>A tissue-specific atlas of mouse protein phosphorylation and expression.</title>
        <authorList>
            <person name="Huttlin E.L."/>
            <person name="Jedrychowski M.P."/>
            <person name="Elias J.E."/>
            <person name="Goswami T."/>
            <person name="Rad R."/>
            <person name="Beausoleil S.A."/>
            <person name="Villen J."/>
            <person name="Haas W."/>
            <person name="Sowa M.E."/>
            <person name="Gygi S.P."/>
        </authorList>
    </citation>
    <scope>PHOSPHORYLATION [LARGE SCALE ANALYSIS] AT SER-28</scope>
    <scope>IDENTIFICATION BY MASS SPECTROMETRY [LARGE SCALE ANALYSIS]</scope>
    <source>
        <tissue>Kidney</tissue>
    </source>
</reference>
<protein>
    <recommendedName>
        <fullName>Coiled-coil domain-containing protein 102A</fullName>
    </recommendedName>
</protein>
<name>C102A_MOUSE</name>
<accession>Q3TMW1</accession>
<accession>A0AUL1</accession>
<accession>Q3B7Y4</accession>
<gene>
    <name type="primary">Ccdc102a</name>
</gene>
<dbReference type="EMBL" id="AK165668">
    <property type="protein sequence ID" value="BAE38329.1"/>
    <property type="molecule type" value="mRNA"/>
</dbReference>
<dbReference type="EMBL" id="BC107374">
    <property type="protein sequence ID" value="AAI07375.1"/>
    <property type="molecule type" value="mRNA"/>
</dbReference>
<dbReference type="EMBL" id="BC107375">
    <property type="protein sequence ID" value="AAI07376.1"/>
    <property type="molecule type" value="mRNA"/>
</dbReference>
<dbReference type="CCDS" id="CCDS22551.1"/>
<dbReference type="RefSeq" id="NP_001028705.2">
    <property type="nucleotide sequence ID" value="NM_001033533.3"/>
</dbReference>
<dbReference type="RefSeq" id="XP_011246656.1">
    <property type="nucleotide sequence ID" value="XM_011248354.4"/>
</dbReference>
<dbReference type="SMR" id="Q3TMW1"/>
<dbReference type="BioGRID" id="231542">
    <property type="interactions" value="1"/>
</dbReference>
<dbReference type="FunCoup" id="Q3TMW1">
    <property type="interactions" value="39"/>
</dbReference>
<dbReference type="IntAct" id="Q3TMW1">
    <property type="interactions" value="1"/>
</dbReference>
<dbReference type="STRING" id="10090.ENSMUSP00000077107"/>
<dbReference type="GlyGen" id="Q3TMW1">
    <property type="glycosylation" value="2 sites"/>
</dbReference>
<dbReference type="iPTMnet" id="Q3TMW1"/>
<dbReference type="PhosphoSitePlus" id="Q3TMW1"/>
<dbReference type="PaxDb" id="10090-ENSMUSP00000077107"/>
<dbReference type="ProteomicsDB" id="273563"/>
<dbReference type="Pumba" id="Q3TMW1"/>
<dbReference type="Antibodypedia" id="48917">
    <property type="antibodies" value="106 antibodies from 24 providers"/>
</dbReference>
<dbReference type="DNASU" id="234582"/>
<dbReference type="Ensembl" id="ENSMUST00000077955.6">
    <property type="protein sequence ID" value="ENSMUSP00000077107.6"/>
    <property type="gene ID" value="ENSMUSG00000063605.6"/>
</dbReference>
<dbReference type="GeneID" id="234582"/>
<dbReference type="KEGG" id="mmu:234582"/>
<dbReference type="UCSC" id="uc009mxh.2">
    <property type="organism name" value="mouse"/>
</dbReference>
<dbReference type="AGR" id="MGI:2686927"/>
<dbReference type="CTD" id="92922"/>
<dbReference type="MGI" id="MGI:2686927">
    <property type="gene designation" value="Ccdc102a"/>
</dbReference>
<dbReference type="VEuPathDB" id="HostDB:ENSMUSG00000063605"/>
<dbReference type="eggNOG" id="ENOG502QSJ6">
    <property type="taxonomic scope" value="Eukaryota"/>
</dbReference>
<dbReference type="GeneTree" id="ENSGT00730000110960"/>
<dbReference type="HOGENOM" id="CLU_033486_1_0_1"/>
<dbReference type="InParanoid" id="Q3TMW1"/>
<dbReference type="OMA" id="EELEGCW"/>
<dbReference type="OrthoDB" id="5984396at2759"/>
<dbReference type="PhylomeDB" id="Q3TMW1"/>
<dbReference type="TreeFam" id="TF320856"/>
<dbReference type="BioGRID-ORCS" id="234582">
    <property type="hits" value="4 hits in 75 CRISPR screens"/>
</dbReference>
<dbReference type="PRO" id="PR:Q3TMW1"/>
<dbReference type="Proteomes" id="UP000000589">
    <property type="component" value="Chromosome 8"/>
</dbReference>
<dbReference type="RNAct" id="Q3TMW1">
    <property type="molecule type" value="protein"/>
</dbReference>
<dbReference type="Bgee" id="ENSMUSG00000063605">
    <property type="expression patterns" value="Expressed in humerus cartilage element and 219 other cell types or tissues"/>
</dbReference>
<dbReference type="ExpressionAtlas" id="Q3TMW1">
    <property type="expression patterns" value="baseline and differential"/>
</dbReference>
<dbReference type="GO" id="GO:0016459">
    <property type="term" value="C:myosin complex"/>
    <property type="evidence" value="ECO:0007669"/>
    <property type="project" value="InterPro"/>
</dbReference>
<dbReference type="Gene3D" id="6.10.250.2420">
    <property type="match status" value="1"/>
</dbReference>
<dbReference type="InterPro" id="IPR002928">
    <property type="entry name" value="Myosin_tail"/>
</dbReference>
<dbReference type="PANTHER" id="PTHR46292">
    <property type="entry name" value="COILED-COIL DOMAIN-CONTAINING PROTEIN 102A"/>
    <property type="match status" value="1"/>
</dbReference>
<dbReference type="PANTHER" id="PTHR46292:SF3">
    <property type="entry name" value="COILED-COIL DOMAIN-CONTAINING PROTEIN 102A"/>
    <property type="match status" value="1"/>
</dbReference>
<dbReference type="Pfam" id="PF01576">
    <property type="entry name" value="Myosin_tail_1"/>
    <property type="match status" value="1"/>
</dbReference>
<dbReference type="SUPFAM" id="SSF90257">
    <property type="entry name" value="Myosin rod fragments"/>
    <property type="match status" value="1"/>
</dbReference>
<keyword id="KW-0175">Coiled coil</keyword>
<keyword id="KW-0597">Phosphoprotein</keyword>
<keyword id="KW-1185">Reference proteome</keyword>
<proteinExistence type="evidence at protein level"/>
<organism>
    <name type="scientific">Mus musculus</name>
    <name type="common">Mouse</name>
    <dbReference type="NCBI Taxonomy" id="10090"/>
    <lineage>
        <taxon>Eukaryota</taxon>
        <taxon>Metazoa</taxon>
        <taxon>Chordata</taxon>
        <taxon>Craniata</taxon>
        <taxon>Vertebrata</taxon>
        <taxon>Euteleostomi</taxon>
        <taxon>Mammalia</taxon>
        <taxon>Eutheria</taxon>
        <taxon>Euarchontoglires</taxon>
        <taxon>Glires</taxon>
        <taxon>Rodentia</taxon>
        <taxon>Myomorpha</taxon>
        <taxon>Muroidea</taxon>
        <taxon>Muridae</taxon>
        <taxon>Murinae</taxon>
        <taxon>Mus</taxon>
        <taxon>Mus</taxon>
    </lineage>
</organism>
<feature type="chain" id="PRO_0000274401" description="Coiled-coil domain-containing protein 102A">
    <location>
        <begin position="1"/>
        <end position="549"/>
    </location>
</feature>
<feature type="region of interest" description="Disordered" evidence="3">
    <location>
        <begin position="1"/>
        <end position="61"/>
    </location>
</feature>
<feature type="region of interest" description="Disordered" evidence="3">
    <location>
        <begin position="135"/>
        <end position="195"/>
    </location>
</feature>
<feature type="region of interest" description="Disordered" evidence="3">
    <location>
        <begin position="207"/>
        <end position="248"/>
    </location>
</feature>
<feature type="region of interest" description="Disordered" evidence="3">
    <location>
        <begin position="472"/>
        <end position="496"/>
    </location>
</feature>
<feature type="region of interest" description="Disordered" evidence="3">
    <location>
        <begin position="509"/>
        <end position="549"/>
    </location>
</feature>
<feature type="coiled-coil region" evidence="2">
    <location>
        <begin position="69"/>
        <end position="160"/>
    </location>
</feature>
<feature type="coiled-coil region" evidence="2">
    <location>
        <begin position="263"/>
        <end position="398"/>
    </location>
</feature>
<feature type="coiled-coil region" evidence="2">
    <location>
        <begin position="426"/>
        <end position="517"/>
    </location>
</feature>
<feature type="compositionally biased region" description="Pro residues" evidence="3">
    <location>
        <begin position="37"/>
        <end position="55"/>
    </location>
</feature>
<feature type="compositionally biased region" description="Basic and acidic residues" evidence="3">
    <location>
        <begin position="135"/>
        <end position="158"/>
    </location>
</feature>
<feature type="compositionally biased region" description="Basic and acidic residues" evidence="3">
    <location>
        <begin position="165"/>
        <end position="187"/>
    </location>
</feature>
<feature type="compositionally biased region" description="Acidic residues" evidence="3">
    <location>
        <begin position="530"/>
        <end position="549"/>
    </location>
</feature>
<feature type="modified residue" description="Phosphoserine" evidence="1">
    <location>
        <position position="12"/>
    </location>
</feature>
<feature type="modified residue" description="Phosphoserine" evidence="1">
    <location>
        <position position="26"/>
    </location>
</feature>
<feature type="modified residue" description="Phosphoserine" evidence="5">
    <location>
        <position position="28"/>
    </location>
</feature>
<feature type="modified residue" description="Phosphoserine" evidence="1">
    <location>
        <position position="536"/>
    </location>
</feature>
<feature type="sequence conflict" description="In Ref. 1; BAE38329." evidence="4" ref="1">
    <original>R</original>
    <variation>P</variation>
    <location>
        <position position="235"/>
    </location>
</feature>
<feature type="sequence conflict" description="In Ref. 1; BAE38329." evidence="4" ref="1">
    <original>N</original>
    <variation>H</variation>
    <location>
        <position position="442"/>
    </location>
</feature>